<sequence length="343" mass="38642">MTLNSLPIFLVLISGIFCQYDYGPADDYGYDPFGPSTAVCAPECNCPLSYPTAMYCDNLKLKTIPIVPSGIKYLYLRNNMIEAIEENTFDNVTDLQWLILDHNHLENSKIKGRVFSKLKNLKKLHINYNNLTEAVGPLPKTLDDLQLSHNKITKVNPGALEGLVNLTVIHLQNNQLKTDSISGAFKGLNSLLYLDLSFNQLTKLPTGLPHSLLMLYFDNNQISNIPDEYFQGFKTLQYLRLSHNKLTDSGIPGNVFNITSLVELDLSFNQLKSIPTVSENLENFYLQVNKINKFPLSSFCKVVGPLTYSKITHLRLDGNNLTRADLPQEMYNCLRVAADISLE</sequence>
<protein>
    <recommendedName>
        <fullName>Lumican</fullName>
    </recommendedName>
    <alternativeName>
        <fullName>Keratan sulfate proteoglycan lumican</fullName>
        <shortName>KSPG lumican</shortName>
    </alternativeName>
</protein>
<accession>P51890</accession>
<reference key="1">
    <citation type="journal article" date="1992" name="J. Biol. Chem.">
        <title>cDNA to chick lumican (corneal keratan sulfate proteoglycan) reveals homology to the small interstitial proteoglycan gene family and expression in muscle and intestine.</title>
        <authorList>
            <person name="Blochberger T.C."/>
            <person name="Vergnes J.-P."/>
            <person name="Hempel J."/>
            <person name="Hassell J.R."/>
        </authorList>
    </citation>
    <scope>NUCLEOTIDE SEQUENCE [MRNA]</scope>
</reference>
<reference key="2">
    <citation type="journal article" date="1998" name="J. Biol. Chem.">
        <title>Identification of the N-linked oligosaccharide sites in chick corneal lumican and keratocan that receive keratan sulfate.</title>
        <authorList>
            <person name="Dunlevy J.R."/>
            <person name="Neame P.J."/>
            <person name="Vergnes J.-P."/>
            <person name="Hassell J.R."/>
        </authorList>
    </citation>
    <scope>PROTEIN SEQUENCE OF 79-85; 155-167 AND 246-256</scope>
    <scope>GLYCOSYLATION AT ASN-91; ASN-165 AND ASN-257</scope>
    <source>
        <tissue>Cornea</tissue>
    </source>
</reference>
<keyword id="KW-0903">Direct protein sequencing</keyword>
<keyword id="KW-1015">Disulfide bond</keyword>
<keyword id="KW-0272">Extracellular matrix</keyword>
<keyword id="KW-0325">Glycoprotein</keyword>
<keyword id="KW-0433">Leucine-rich repeat</keyword>
<keyword id="KW-0654">Proteoglycan</keyword>
<keyword id="KW-0873">Pyrrolidone carboxylic acid</keyword>
<keyword id="KW-1185">Reference proteome</keyword>
<keyword id="KW-0677">Repeat</keyword>
<keyword id="KW-0964">Secreted</keyword>
<keyword id="KW-0732">Signal</keyword>
<keyword id="KW-0765">Sulfation</keyword>
<proteinExistence type="evidence at protein level"/>
<feature type="signal peptide" evidence="1">
    <location>
        <begin position="1"/>
        <end position="18"/>
    </location>
</feature>
<feature type="chain" id="PRO_0000032736" description="Lumican">
    <location>
        <begin position="19"/>
        <end position="343"/>
    </location>
</feature>
<feature type="domain" description="LRRNT">
    <location>
        <begin position="31"/>
        <end position="69"/>
    </location>
</feature>
<feature type="repeat" description="LRR 1">
    <location>
        <begin position="70"/>
        <end position="91"/>
    </location>
</feature>
<feature type="repeat" description="LRR 2">
    <location>
        <begin position="94"/>
        <end position="117"/>
    </location>
</feature>
<feature type="repeat" description="LRR 3">
    <location>
        <begin position="120"/>
        <end position="140"/>
    </location>
</feature>
<feature type="repeat" description="LRR 4">
    <location>
        <begin position="141"/>
        <end position="162"/>
    </location>
</feature>
<feature type="repeat" description="LRR 5">
    <location>
        <begin position="165"/>
        <end position="186"/>
    </location>
</feature>
<feature type="repeat" description="LRR 6">
    <location>
        <begin position="190"/>
        <end position="211"/>
    </location>
</feature>
<feature type="repeat" description="LRR 7">
    <location>
        <begin position="212"/>
        <end position="232"/>
    </location>
</feature>
<feature type="repeat" description="LRR 8">
    <location>
        <begin position="235"/>
        <end position="255"/>
    </location>
</feature>
<feature type="repeat" description="LRR 9">
    <location>
        <begin position="260"/>
        <end position="281"/>
    </location>
</feature>
<feature type="repeat" description="LRR 10">
    <location>
        <begin position="282"/>
        <end position="301"/>
    </location>
</feature>
<feature type="repeat" description="LRR 11">
    <location>
        <begin position="310"/>
        <end position="330"/>
    </location>
</feature>
<feature type="modified residue" description="Pyrrolidone carboxylic acid" evidence="1">
    <location>
        <position position="19"/>
    </location>
</feature>
<feature type="modified residue" description="Sulfotyrosine" evidence="2">
    <location>
        <position position="20"/>
    </location>
</feature>
<feature type="modified residue" description="Sulfotyrosine" evidence="2">
    <location>
        <position position="22"/>
    </location>
</feature>
<feature type="glycosylation site" description="N-linked (GlcNAc...) (keratan sulfate) asparagine" evidence="4">
    <location>
        <position position="91"/>
    </location>
</feature>
<feature type="glycosylation site" description="N-linked (GlcNAc...) (keratan sulfate) asparagine" evidence="3">
    <location>
        <position position="130"/>
    </location>
</feature>
<feature type="glycosylation site" description="N-linked (GlcNAc...) (keratan sulfate) asparagine" evidence="4">
    <location>
        <position position="165"/>
    </location>
</feature>
<feature type="glycosylation site" description="N-linked (GlcNAc...) (keratan sulfate) asparagine" evidence="4">
    <location>
        <position position="257"/>
    </location>
</feature>
<feature type="glycosylation site" description="N-linked (GlcNAc...) asparagine" evidence="3">
    <location>
        <position position="320"/>
    </location>
</feature>
<feature type="disulfide bond" evidence="1">
    <location>
        <begin position="300"/>
        <end position="333"/>
    </location>
</feature>
<name>LUM_CHICK</name>
<gene>
    <name type="primary">LUM</name>
    <name type="synonym">LDC</name>
</gene>
<evidence type="ECO:0000250" key="1"/>
<evidence type="ECO:0000250" key="2">
    <source>
        <dbReference type="UniProtKB" id="P51885"/>
    </source>
</evidence>
<evidence type="ECO:0000255" key="3"/>
<evidence type="ECO:0000269" key="4">
    <source>
    </source>
</evidence>
<evidence type="ECO:0000305" key="5"/>
<comment type="subunit">
    <text evidence="1">Binds to laminin.</text>
</comment>
<comment type="subcellular location">
    <subcellularLocation>
        <location evidence="1">Secreted</location>
        <location evidence="1">Extracellular space</location>
        <location evidence="1">Extracellular matrix</location>
    </subcellularLocation>
</comment>
<comment type="tissue specificity">
    <text>Cornea and other tissues.</text>
</comment>
<comment type="PTM">
    <text evidence="4">Contains keratan sulfate.</text>
</comment>
<comment type="similarity">
    <text evidence="5">Belongs to the small leucine-rich proteoglycan (SLRP) family. SLRP class II subfamily.</text>
</comment>
<organism>
    <name type="scientific">Gallus gallus</name>
    <name type="common">Chicken</name>
    <dbReference type="NCBI Taxonomy" id="9031"/>
    <lineage>
        <taxon>Eukaryota</taxon>
        <taxon>Metazoa</taxon>
        <taxon>Chordata</taxon>
        <taxon>Craniata</taxon>
        <taxon>Vertebrata</taxon>
        <taxon>Euteleostomi</taxon>
        <taxon>Archelosauria</taxon>
        <taxon>Archosauria</taxon>
        <taxon>Dinosauria</taxon>
        <taxon>Saurischia</taxon>
        <taxon>Theropoda</taxon>
        <taxon>Coelurosauria</taxon>
        <taxon>Aves</taxon>
        <taxon>Neognathae</taxon>
        <taxon>Galloanserae</taxon>
        <taxon>Galliformes</taxon>
        <taxon>Phasianidae</taxon>
        <taxon>Phasianinae</taxon>
        <taxon>Gallus</taxon>
    </lineage>
</organism>
<dbReference type="EMBL" id="M80584">
    <property type="status" value="NOT_ANNOTATED_CDS"/>
    <property type="molecule type" value="mRNA"/>
</dbReference>
<dbReference type="PIR" id="A41748">
    <property type="entry name" value="A41748"/>
</dbReference>
<dbReference type="RefSeq" id="NP_001263286.1">
    <property type="nucleotide sequence ID" value="NM_001276357.2"/>
</dbReference>
<dbReference type="SMR" id="P51890"/>
<dbReference type="FunCoup" id="P51890">
    <property type="interactions" value="1250"/>
</dbReference>
<dbReference type="STRING" id="9031.ENSGALP00000018370"/>
<dbReference type="GlyCosmos" id="P51890">
    <property type="glycosylation" value="5 sites, No reported glycans"/>
</dbReference>
<dbReference type="GlyGen" id="P51890">
    <property type="glycosylation" value="5 sites"/>
</dbReference>
<dbReference type="iPTMnet" id="P51890"/>
<dbReference type="PaxDb" id="9031-ENSGALP00000018370"/>
<dbReference type="Ensembl" id="ENSGALT00010032087.1">
    <property type="protein sequence ID" value="ENSGALP00010018877.1"/>
    <property type="gene ID" value="ENSGALG00010013332.1"/>
</dbReference>
<dbReference type="GeneID" id="417891"/>
<dbReference type="KEGG" id="gga:417891"/>
<dbReference type="CTD" id="4060"/>
<dbReference type="VEuPathDB" id="HostDB:geneid_417891"/>
<dbReference type="eggNOG" id="KOG0619">
    <property type="taxonomic scope" value="Eukaryota"/>
</dbReference>
<dbReference type="GeneTree" id="ENSGT00940000158177"/>
<dbReference type="HOGENOM" id="CLU_000288_186_4_1"/>
<dbReference type="InParanoid" id="P51890"/>
<dbReference type="OMA" id="DCPINFP"/>
<dbReference type="OrthoDB" id="6359842at2759"/>
<dbReference type="PhylomeDB" id="P51890"/>
<dbReference type="TreeFam" id="TF334562"/>
<dbReference type="Reactome" id="R-GGA-2022854">
    <property type="pathway name" value="Keratan sulfate biosynthesis"/>
</dbReference>
<dbReference type="Reactome" id="R-GGA-2022857">
    <property type="pathway name" value="Keratan sulfate degradation"/>
</dbReference>
<dbReference type="Reactome" id="R-GGA-216083">
    <property type="pathway name" value="Integrin cell surface interactions"/>
</dbReference>
<dbReference type="PRO" id="PR:P51890"/>
<dbReference type="Proteomes" id="UP000000539">
    <property type="component" value="Chromosome 1"/>
</dbReference>
<dbReference type="Bgee" id="ENSGALG00000011271">
    <property type="expression patterns" value="Expressed in colon and 10 other cell types or tissues"/>
</dbReference>
<dbReference type="GO" id="GO:0005615">
    <property type="term" value="C:extracellular space"/>
    <property type="evidence" value="ECO:0000318"/>
    <property type="project" value="GO_Central"/>
</dbReference>
<dbReference type="GO" id="GO:0005518">
    <property type="term" value="F:collagen binding"/>
    <property type="evidence" value="ECO:0000318"/>
    <property type="project" value="GO_Central"/>
</dbReference>
<dbReference type="FunFam" id="3.80.10.10:FF:000063">
    <property type="entry name" value="Lumican"/>
    <property type="match status" value="1"/>
</dbReference>
<dbReference type="FunFam" id="3.80.10.10:FF:000073">
    <property type="entry name" value="Lumican"/>
    <property type="match status" value="1"/>
</dbReference>
<dbReference type="FunFam" id="3.80.10.10:FF:000151">
    <property type="entry name" value="Lumican"/>
    <property type="match status" value="1"/>
</dbReference>
<dbReference type="Gene3D" id="3.80.10.10">
    <property type="entry name" value="Ribonuclease Inhibitor"/>
    <property type="match status" value="3"/>
</dbReference>
<dbReference type="InterPro" id="IPR001611">
    <property type="entry name" value="Leu-rich_rpt"/>
</dbReference>
<dbReference type="InterPro" id="IPR003591">
    <property type="entry name" value="Leu-rich_rpt_typical-subtyp"/>
</dbReference>
<dbReference type="InterPro" id="IPR032675">
    <property type="entry name" value="LRR_dom_sf"/>
</dbReference>
<dbReference type="InterPro" id="IPR000372">
    <property type="entry name" value="LRRNT"/>
</dbReference>
<dbReference type="InterPro" id="IPR050333">
    <property type="entry name" value="SLRP"/>
</dbReference>
<dbReference type="PANTHER" id="PTHR45712">
    <property type="entry name" value="AGAP008170-PA"/>
    <property type="match status" value="1"/>
</dbReference>
<dbReference type="PANTHER" id="PTHR45712:SF6">
    <property type="entry name" value="LUMICAN"/>
    <property type="match status" value="1"/>
</dbReference>
<dbReference type="Pfam" id="PF00560">
    <property type="entry name" value="LRR_1"/>
    <property type="match status" value="1"/>
</dbReference>
<dbReference type="Pfam" id="PF13855">
    <property type="entry name" value="LRR_8"/>
    <property type="match status" value="3"/>
</dbReference>
<dbReference type="Pfam" id="PF01462">
    <property type="entry name" value="LRRNT"/>
    <property type="match status" value="1"/>
</dbReference>
<dbReference type="PRINTS" id="PR00019">
    <property type="entry name" value="LEURICHRPT"/>
</dbReference>
<dbReference type="SMART" id="SM00364">
    <property type="entry name" value="LRR_BAC"/>
    <property type="match status" value="5"/>
</dbReference>
<dbReference type="SMART" id="SM00365">
    <property type="entry name" value="LRR_SD22"/>
    <property type="match status" value="5"/>
</dbReference>
<dbReference type="SMART" id="SM00369">
    <property type="entry name" value="LRR_TYP"/>
    <property type="match status" value="8"/>
</dbReference>
<dbReference type="SMART" id="SM00013">
    <property type="entry name" value="LRRNT"/>
    <property type="match status" value="1"/>
</dbReference>
<dbReference type="SUPFAM" id="SSF52058">
    <property type="entry name" value="L domain-like"/>
    <property type="match status" value="1"/>
</dbReference>
<dbReference type="PROSITE" id="PS51450">
    <property type="entry name" value="LRR"/>
    <property type="match status" value="10"/>
</dbReference>